<sequence>VVGGDECNINDHRSLVRIF</sequence>
<feature type="chain" id="PRO_0000416396" description="Thrombin-like enzyme purpurase">
    <location>
        <begin position="1"/>
        <end position="19" status="greater than"/>
    </location>
</feature>
<feature type="domain" description="Peptidase S1" evidence="2">
    <location>
        <begin position="1"/>
        <end position="19" status="greater than"/>
    </location>
</feature>
<feature type="disulfide bond">
    <location>
        <begin position="7"/>
        <end status="unknown"/>
    </location>
</feature>
<feature type="non-terminal residue">
    <location>
        <position position="19"/>
    </location>
</feature>
<reference key="1">
    <citation type="journal article" date="2010" name="Comp. Biochem. Physiol.">
        <title>Isolation and characterization of the thrombin-like enzyme from Cryptelytrops purpureomaculatus venom.</title>
        <authorList>
            <person name="Tan N.H."/>
        </authorList>
    </citation>
    <scope>PROTEIN SEQUENCE</scope>
    <scope>FUNCTION</scope>
    <scope>BIOPHYSICOCHEMICAL PROPERTIES</scope>
    <scope>SUBUNIT</scope>
    <source>
        <tissue>Venom</tissue>
    </source>
</reference>
<name>VSPP_TRIPP</name>
<evidence type="ECO:0000250" key="1"/>
<evidence type="ECO:0000255" key="2">
    <source>
        <dbReference type="PROSITE-ProRule" id="PRU00274"/>
    </source>
</evidence>
<evidence type="ECO:0000269" key="3">
    <source>
    </source>
</evidence>
<keyword id="KW-1204">Blood coagulation cascade activating toxin</keyword>
<keyword id="KW-0903">Direct protein sequencing</keyword>
<keyword id="KW-1015">Disulfide bond</keyword>
<keyword id="KW-0325">Glycoprotein</keyword>
<keyword id="KW-1199">Hemostasis impairing toxin</keyword>
<keyword id="KW-0378">Hydrolase</keyword>
<keyword id="KW-0645">Protease</keyword>
<keyword id="KW-0964">Secreted</keyword>
<keyword id="KW-0720">Serine protease</keyword>
<keyword id="KW-0800">Toxin</keyword>
<dbReference type="EC" id="3.4.21.-"/>
<dbReference type="GO" id="GO:0005576">
    <property type="term" value="C:extracellular region"/>
    <property type="evidence" value="ECO:0007669"/>
    <property type="project" value="UniProtKB-SubCell"/>
</dbReference>
<dbReference type="GO" id="GO:0008236">
    <property type="term" value="F:serine-type peptidase activity"/>
    <property type="evidence" value="ECO:0007669"/>
    <property type="project" value="UniProtKB-KW"/>
</dbReference>
<dbReference type="GO" id="GO:0090729">
    <property type="term" value="F:toxin activity"/>
    <property type="evidence" value="ECO:0007669"/>
    <property type="project" value="UniProtKB-KW"/>
</dbReference>
<dbReference type="GO" id="GO:0006508">
    <property type="term" value="P:proteolysis"/>
    <property type="evidence" value="ECO:0007669"/>
    <property type="project" value="UniProtKB-KW"/>
</dbReference>
<organism>
    <name type="scientific">Trimeresurus purpureomaculatus</name>
    <name type="common">Mangrove pit viper</name>
    <name type="synonym">Cryptelytrops purpureomaculatus</name>
    <dbReference type="NCBI Taxonomy" id="101163"/>
    <lineage>
        <taxon>Eukaryota</taxon>
        <taxon>Metazoa</taxon>
        <taxon>Chordata</taxon>
        <taxon>Craniata</taxon>
        <taxon>Vertebrata</taxon>
        <taxon>Euteleostomi</taxon>
        <taxon>Lepidosauria</taxon>
        <taxon>Squamata</taxon>
        <taxon>Bifurcata</taxon>
        <taxon>Unidentata</taxon>
        <taxon>Episquamata</taxon>
        <taxon>Toxicofera</taxon>
        <taxon>Serpentes</taxon>
        <taxon>Colubroidea</taxon>
        <taxon>Viperidae</taxon>
        <taxon>Crotalinae</taxon>
        <taxon>Trimeresurus</taxon>
    </lineage>
</organism>
<comment type="function">
    <text evidence="3">Thrombin-like snake venom serine protease. Releases only fibrinopeptides A after 2 hours incubation. Clots fibrinogen with different clotting time depending on the species: cat &gt; human &gt; dog &gt; goat &gt;&gt; rabbit.</text>
</comment>
<comment type="biophysicochemical properties">
    <kinetics>
        <KM evidence="3">0.44 mM for N-benzoyl-L-Pro-L-Phe-L-Arg p-nitroanilide</KM>
        <KM evidence="3">0.72 mM for N-benzoyl-L-Phe-L-Val-L-Arg p-nitroanilide</KM>
        <KM evidence="3">0.76 mM for N-benzoyl-L-Val-L-Gly-L-Arg p-nitroanilide</KM>
        <KM evidence="3">0.14 mM for N-p-tosyl-Gly-L-Pro-L-Lys p-nitroanilide</KM>
        <KM evidence="3">0.09 mM for N-alpha-benzoyl-L-arginine ethyl ester (BAEE)</KM>
    </kinetics>
</comment>
<comment type="subunit">
    <text evidence="3">Monomer.</text>
</comment>
<comment type="subcellular location">
    <subcellularLocation>
        <location>Secreted</location>
    </subcellularLocation>
</comment>
<comment type="tissue specificity">
    <text>Expressed by the venom gland.</text>
</comment>
<comment type="PTM">
    <text evidence="1">Glycosylated.</text>
</comment>
<comment type="similarity">
    <text evidence="2">Belongs to the peptidase S1 family. Snake venom subfamily.</text>
</comment>
<accession>P0DJF7</accession>
<proteinExistence type="evidence at protein level"/>
<protein>
    <recommendedName>
        <fullName>Thrombin-like enzyme purpurase</fullName>
        <shortName>SVTLE purpurase</shortName>
        <ecNumber>3.4.21.-</ecNumber>
    </recommendedName>
    <alternativeName>
        <fullName>Fibrinogen-clotting enzyme</fullName>
    </alternativeName>
    <alternativeName>
        <fullName>Snake venom serine protease</fullName>
        <shortName>SVSP</shortName>
    </alternativeName>
</protein>